<evidence type="ECO:0000255" key="1">
    <source>
        <dbReference type="HAMAP-Rule" id="MF_00089"/>
    </source>
</evidence>
<evidence type="ECO:0000305" key="2"/>
<dbReference type="EC" id="4.1.99.17" evidence="1"/>
<dbReference type="EMBL" id="AE003849">
    <property type="protein sequence ID" value="AAF84694.1"/>
    <property type="status" value="ALT_INIT"/>
    <property type="molecule type" value="Genomic_DNA"/>
</dbReference>
<dbReference type="PIR" id="E82624">
    <property type="entry name" value="E82624"/>
</dbReference>
<dbReference type="RefSeq" id="WP_010894354.1">
    <property type="nucleotide sequence ID" value="NC_002488.3"/>
</dbReference>
<dbReference type="SMR" id="Q9PC93"/>
<dbReference type="STRING" id="160492.XF_1888"/>
<dbReference type="KEGG" id="xfa:XF_1888"/>
<dbReference type="PATRIC" id="fig|160492.11.peg.2011"/>
<dbReference type="eggNOG" id="COG0422">
    <property type="taxonomic scope" value="Bacteria"/>
</dbReference>
<dbReference type="HOGENOM" id="CLU_013181_2_1_6"/>
<dbReference type="UniPathway" id="UPA00060"/>
<dbReference type="Proteomes" id="UP000000812">
    <property type="component" value="Chromosome"/>
</dbReference>
<dbReference type="GO" id="GO:0005829">
    <property type="term" value="C:cytosol"/>
    <property type="evidence" value="ECO:0007669"/>
    <property type="project" value="TreeGrafter"/>
</dbReference>
<dbReference type="GO" id="GO:0051539">
    <property type="term" value="F:4 iron, 4 sulfur cluster binding"/>
    <property type="evidence" value="ECO:0007669"/>
    <property type="project" value="UniProtKB-KW"/>
</dbReference>
<dbReference type="GO" id="GO:0016830">
    <property type="term" value="F:carbon-carbon lyase activity"/>
    <property type="evidence" value="ECO:0007669"/>
    <property type="project" value="InterPro"/>
</dbReference>
<dbReference type="GO" id="GO:0008270">
    <property type="term" value="F:zinc ion binding"/>
    <property type="evidence" value="ECO:0007669"/>
    <property type="project" value="UniProtKB-UniRule"/>
</dbReference>
<dbReference type="GO" id="GO:0009228">
    <property type="term" value="P:thiamine biosynthetic process"/>
    <property type="evidence" value="ECO:0007669"/>
    <property type="project" value="UniProtKB-KW"/>
</dbReference>
<dbReference type="GO" id="GO:0009229">
    <property type="term" value="P:thiamine diphosphate biosynthetic process"/>
    <property type="evidence" value="ECO:0007669"/>
    <property type="project" value="UniProtKB-UniRule"/>
</dbReference>
<dbReference type="FunFam" id="3.20.20.540:FF:000001">
    <property type="entry name" value="Phosphomethylpyrimidine synthase"/>
    <property type="match status" value="1"/>
</dbReference>
<dbReference type="Gene3D" id="6.10.250.620">
    <property type="match status" value="1"/>
</dbReference>
<dbReference type="Gene3D" id="3.20.20.540">
    <property type="entry name" value="Radical SAM ThiC family, central domain"/>
    <property type="match status" value="1"/>
</dbReference>
<dbReference type="HAMAP" id="MF_00089">
    <property type="entry name" value="ThiC"/>
    <property type="match status" value="1"/>
</dbReference>
<dbReference type="InterPro" id="IPR037509">
    <property type="entry name" value="ThiC"/>
</dbReference>
<dbReference type="InterPro" id="IPR025747">
    <property type="entry name" value="ThiC-associated_dom"/>
</dbReference>
<dbReference type="InterPro" id="IPR038521">
    <property type="entry name" value="ThiC/Bza_core_dom"/>
</dbReference>
<dbReference type="InterPro" id="IPR002817">
    <property type="entry name" value="ThiC/BzaA/B"/>
</dbReference>
<dbReference type="NCBIfam" id="NF006763">
    <property type="entry name" value="PRK09284.1"/>
    <property type="match status" value="1"/>
</dbReference>
<dbReference type="NCBIfam" id="NF009895">
    <property type="entry name" value="PRK13352.1"/>
    <property type="match status" value="1"/>
</dbReference>
<dbReference type="NCBIfam" id="TIGR00190">
    <property type="entry name" value="thiC"/>
    <property type="match status" value="1"/>
</dbReference>
<dbReference type="PANTHER" id="PTHR30557:SF1">
    <property type="entry name" value="PHOSPHOMETHYLPYRIMIDINE SYNTHASE, CHLOROPLASTIC"/>
    <property type="match status" value="1"/>
</dbReference>
<dbReference type="PANTHER" id="PTHR30557">
    <property type="entry name" value="THIAMINE BIOSYNTHESIS PROTEIN THIC"/>
    <property type="match status" value="1"/>
</dbReference>
<dbReference type="Pfam" id="PF13667">
    <property type="entry name" value="ThiC-associated"/>
    <property type="match status" value="1"/>
</dbReference>
<dbReference type="Pfam" id="PF01964">
    <property type="entry name" value="ThiC_Rad_SAM"/>
    <property type="match status" value="1"/>
</dbReference>
<dbReference type="SFLD" id="SFLDF00407">
    <property type="entry name" value="phosphomethylpyrimidine_syntha"/>
    <property type="match status" value="1"/>
</dbReference>
<dbReference type="SFLD" id="SFLDG01114">
    <property type="entry name" value="phosphomethylpyrimidine_syntha"/>
    <property type="match status" value="1"/>
</dbReference>
<dbReference type="SFLD" id="SFLDS00113">
    <property type="entry name" value="Radical_SAM_Phosphomethylpyrim"/>
    <property type="match status" value="1"/>
</dbReference>
<protein>
    <recommendedName>
        <fullName evidence="1">Phosphomethylpyrimidine synthase</fullName>
        <ecNumber evidence="1">4.1.99.17</ecNumber>
    </recommendedName>
    <alternativeName>
        <fullName evidence="1">Hydroxymethylpyrimidine phosphate synthase</fullName>
        <shortName evidence="1">HMP-P synthase</shortName>
        <shortName evidence="1">HMP-phosphate synthase</shortName>
        <shortName evidence="1">HMPP synthase</shortName>
    </alternativeName>
    <alternativeName>
        <fullName evidence="1">Thiamine biosynthesis protein ThiC</fullName>
    </alternativeName>
</protein>
<organism>
    <name type="scientific">Xylella fastidiosa (strain 9a5c)</name>
    <dbReference type="NCBI Taxonomy" id="160492"/>
    <lineage>
        <taxon>Bacteria</taxon>
        <taxon>Pseudomonadati</taxon>
        <taxon>Pseudomonadota</taxon>
        <taxon>Gammaproteobacteria</taxon>
        <taxon>Lysobacterales</taxon>
        <taxon>Lysobacteraceae</taxon>
        <taxon>Xylella</taxon>
    </lineage>
</organism>
<sequence>MNITTALPLPTHLLSEKVTAPLLGARKIYITGSRQDIRVPMREIALTPSSARYGGNENLSLALYDTSGIYTDPQATIDLACGLPRLRAAWIDERADTVEAALYFKVPESVSVTAPPFPTAPRPRRARDNVAVTQLEYARRGLVTPEMEFVAIREQQRREQTVENLRGQRHAGDAWGALVGTPITPEFVRDEIARGRAILPNNINHPESEPMIIGRNFLTKINANIGTSALSSSIAEEVEKLVWAIRWGADTIMDLSTGRDIHATREWILRNSPVPVGTVPIYQALEKVGGHVEALSWAVFRDTLIEQAEQGVDYVTVHAGVLRDFIPLTASRLTGIVSRGGSIMARWCQAHRSENFLYTHFEELCEIMRAYDVAFSLGDGLRPGCIADANDAAQFAELEILGELTHIAWNHQVQVMVEGPGHVPMHLIKANMDKQLAACGEAPFYTLGPLTTDIAPGYDHITSAIGAAMIGWYGTAMLCYVTPKEHLGLPNLQDVHDGIIAYKIAAHAADLAKGHPAAQARDDALSKARFEFRWQDQFHLSLDPEKALALHDESLPKEAHKRAAFCSMCGPQFCSMKISQEVRDASSNELSDGNTNTNDAI</sequence>
<reference key="1">
    <citation type="journal article" date="2000" name="Nature">
        <title>The genome sequence of the plant pathogen Xylella fastidiosa.</title>
        <authorList>
            <person name="Simpson A.J.G."/>
            <person name="Reinach F.C."/>
            <person name="Arruda P."/>
            <person name="Abreu F.A."/>
            <person name="Acencio M."/>
            <person name="Alvarenga R."/>
            <person name="Alves L.M.C."/>
            <person name="Araya J.E."/>
            <person name="Baia G.S."/>
            <person name="Baptista C.S."/>
            <person name="Barros M.H."/>
            <person name="Bonaccorsi E.D."/>
            <person name="Bordin S."/>
            <person name="Bove J.M."/>
            <person name="Briones M.R.S."/>
            <person name="Bueno M.R.P."/>
            <person name="Camargo A.A."/>
            <person name="Camargo L.E.A."/>
            <person name="Carraro D.M."/>
            <person name="Carrer H."/>
            <person name="Colauto N.B."/>
            <person name="Colombo C."/>
            <person name="Costa F.F."/>
            <person name="Costa M.C.R."/>
            <person name="Costa-Neto C.M."/>
            <person name="Coutinho L.L."/>
            <person name="Cristofani M."/>
            <person name="Dias-Neto E."/>
            <person name="Docena C."/>
            <person name="El-Dorry H."/>
            <person name="Facincani A.P."/>
            <person name="Ferreira A.J.S."/>
            <person name="Ferreira V.C.A."/>
            <person name="Ferro J.A."/>
            <person name="Fraga J.S."/>
            <person name="Franca S.C."/>
            <person name="Franco M.C."/>
            <person name="Frohme M."/>
            <person name="Furlan L.R."/>
            <person name="Garnier M."/>
            <person name="Goldman G.H."/>
            <person name="Goldman M.H.S."/>
            <person name="Gomes S.L."/>
            <person name="Gruber A."/>
            <person name="Ho P.L."/>
            <person name="Hoheisel J.D."/>
            <person name="Junqueira M.L."/>
            <person name="Kemper E.L."/>
            <person name="Kitajima J.P."/>
            <person name="Krieger J.E."/>
            <person name="Kuramae E.E."/>
            <person name="Laigret F."/>
            <person name="Lambais M.R."/>
            <person name="Leite L.C.C."/>
            <person name="Lemos E.G.M."/>
            <person name="Lemos M.V.F."/>
            <person name="Lopes S.A."/>
            <person name="Lopes C.R."/>
            <person name="Machado J.A."/>
            <person name="Machado M.A."/>
            <person name="Madeira A.M.B.N."/>
            <person name="Madeira H.M.F."/>
            <person name="Marino C.L."/>
            <person name="Marques M.V."/>
            <person name="Martins E.A.L."/>
            <person name="Martins E.M.F."/>
            <person name="Matsukuma A.Y."/>
            <person name="Menck C.F.M."/>
            <person name="Miracca E.C."/>
            <person name="Miyaki C.Y."/>
            <person name="Monteiro-Vitorello C.B."/>
            <person name="Moon D.H."/>
            <person name="Nagai M.A."/>
            <person name="Nascimento A.L.T.O."/>
            <person name="Netto L.E.S."/>
            <person name="Nhani A. Jr."/>
            <person name="Nobrega F.G."/>
            <person name="Nunes L.R."/>
            <person name="Oliveira M.A."/>
            <person name="de Oliveira M.C."/>
            <person name="de Oliveira R.C."/>
            <person name="Palmieri D.A."/>
            <person name="Paris A."/>
            <person name="Peixoto B.R."/>
            <person name="Pereira G.A.G."/>
            <person name="Pereira H.A. Jr."/>
            <person name="Pesquero J.B."/>
            <person name="Quaggio R.B."/>
            <person name="Roberto P.G."/>
            <person name="Rodrigues V."/>
            <person name="de Rosa A.J.M."/>
            <person name="de Rosa V.E. Jr."/>
            <person name="de Sa R.G."/>
            <person name="Santelli R.V."/>
            <person name="Sawasaki H.E."/>
            <person name="da Silva A.C.R."/>
            <person name="da Silva A.M."/>
            <person name="da Silva F.R."/>
            <person name="Silva W.A. Jr."/>
            <person name="da Silveira J.F."/>
            <person name="Silvestri M.L.Z."/>
            <person name="Siqueira W.J."/>
            <person name="de Souza A.A."/>
            <person name="de Souza A.P."/>
            <person name="Terenzi M.F."/>
            <person name="Truffi D."/>
            <person name="Tsai S.M."/>
            <person name="Tsuhako M.H."/>
            <person name="Vallada H."/>
            <person name="Van Sluys M.A."/>
            <person name="Verjovski-Almeida S."/>
            <person name="Vettore A.L."/>
            <person name="Zago M.A."/>
            <person name="Zatz M."/>
            <person name="Meidanis J."/>
            <person name="Setubal J.C."/>
        </authorList>
    </citation>
    <scope>NUCLEOTIDE SEQUENCE [LARGE SCALE GENOMIC DNA]</scope>
    <source>
        <strain>9a5c</strain>
    </source>
</reference>
<comment type="function">
    <text evidence="1">Catalyzes the synthesis of the hydroxymethylpyrimidine phosphate (HMP-P) moiety of thiamine from aminoimidazole ribotide (AIR) in a radical S-adenosyl-L-methionine (SAM)-dependent reaction.</text>
</comment>
<comment type="catalytic activity">
    <reaction evidence="1">
        <text>5-amino-1-(5-phospho-beta-D-ribosyl)imidazole + S-adenosyl-L-methionine = 4-amino-2-methyl-5-(phosphooxymethyl)pyrimidine + CO + 5'-deoxyadenosine + formate + L-methionine + 3 H(+)</text>
        <dbReference type="Rhea" id="RHEA:24840"/>
        <dbReference type="ChEBI" id="CHEBI:15378"/>
        <dbReference type="ChEBI" id="CHEBI:15740"/>
        <dbReference type="ChEBI" id="CHEBI:17245"/>
        <dbReference type="ChEBI" id="CHEBI:17319"/>
        <dbReference type="ChEBI" id="CHEBI:57844"/>
        <dbReference type="ChEBI" id="CHEBI:58354"/>
        <dbReference type="ChEBI" id="CHEBI:59789"/>
        <dbReference type="ChEBI" id="CHEBI:137981"/>
        <dbReference type="EC" id="4.1.99.17"/>
    </reaction>
</comment>
<comment type="cofactor">
    <cofactor evidence="1">
        <name>[4Fe-4S] cluster</name>
        <dbReference type="ChEBI" id="CHEBI:49883"/>
    </cofactor>
    <text evidence="1">Binds 1 [4Fe-4S] cluster per subunit. The cluster is coordinated with 3 cysteines and an exchangeable S-adenosyl-L-methionine.</text>
</comment>
<comment type="pathway">
    <text evidence="1">Cofactor biosynthesis; thiamine diphosphate biosynthesis.</text>
</comment>
<comment type="subunit">
    <text evidence="1">Homodimer.</text>
</comment>
<comment type="similarity">
    <text evidence="1">Belongs to the ThiC family.</text>
</comment>
<comment type="sequence caution" evidence="2">
    <conflict type="erroneous initiation">
        <sequence resource="EMBL-CDS" id="AAF84694"/>
    </conflict>
</comment>
<feature type="chain" id="PRO_0000152853" description="Phosphomethylpyrimidine synthase">
    <location>
        <begin position="1"/>
        <end position="601"/>
    </location>
</feature>
<feature type="binding site" evidence="1">
    <location>
        <position position="224"/>
    </location>
    <ligand>
        <name>substrate</name>
    </ligand>
</feature>
<feature type="binding site" evidence="1">
    <location>
        <position position="253"/>
    </location>
    <ligand>
        <name>substrate</name>
    </ligand>
</feature>
<feature type="binding site" evidence="1">
    <location>
        <position position="282"/>
    </location>
    <ligand>
        <name>substrate</name>
    </ligand>
</feature>
<feature type="binding site" evidence="1">
    <location>
        <position position="318"/>
    </location>
    <ligand>
        <name>substrate</name>
    </ligand>
</feature>
<feature type="binding site" evidence="1">
    <location>
        <begin position="338"/>
        <end position="340"/>
    </location>
    <ligand>
        <name>substrate</name>
    </ligand>
</feature>
<feature type="binding site" evidence="1">
    <location>
        <begin position="379"/>
        <end position="382"/>
    </location>
    <ligand>
        <name>substrate</name>
    </ligand>
</feature>
<feature type="binding site" evidence="1">
    <location>
        <position position="418"/>
    </location>
    <ligand>
        <name>substrate</name>
    </ligand>
</feature>
<feature type="binding site" evidence="1">
    <location>
        <position position="422"/>
    </location>
    <ligand>
        <name>Zn(2+)</name>
        <dbReference type="ChEBI" id="CHEBI:29105"/>
    </ligand>
</feature>
<feature type="binding site" evidence="1">
    <location>
        <position position="445"/>
    </location>
    <ligand>
        <name>substrate</name>
    </ligand>
</feature>
<feature type="binding site" evidence="1">
    <location>
        <position position="486"/>
    </location>
    <ligand>
        <name>Zn(2+)</name>
        <dbReference type="ChEBI" id="CHEBI:29105"/>
    </ligand>
</feature>
<feature type="binding site" evidence="1">
    <location>
        <position position="566"/>
    </location>
    <ligand>
        <name>[4Fe-4S] cluster</name>
        <dbReference type="ChEBI" id="CHEBI:49883"/>
        <note>4Fe-4S-S-AdoMet</note>
    </ligand>
</feature>
<feature type="binding site" evidence="1">
    <location>
        <position position="569"/>
    </location>
    <ligand>
        <name>[4Fe-4S] cluster</name>
        <dbReference type="ChEBI" id="CHEBI:49883"/>
        <note>4Fe-4S-S-AdoMet</note>
    </ligand>
</feature>
<feature type="binding site" evidence="1">
    <location>
        <position position="574"/>
    </location>
    <ligand>
        <name>[4Fe-4S] cluster</name>
        <dbReference type="ChEBI" id="CHEBI:49883"/>
        <note>4Fe-4S-S-AdoMet</note>
    </ligand>
</feature>
<proteinExistence type="inferred from homology"/>
<gene>
    <name evidence="1" type="primary">thiC</name>
    <name type="ordered locus">XF_1888</name>
</gene>
<name>THIC_XYLFA</name>
<keyword id="KW-0004">4Fe-4S</keyword>
<keyword id="KW-0408">Iron</keyword>
<keyword id="KW-0411">Iron-sulfur</keyword>
<keyword id="KW-0456">Lyase</keyword>
<keyword id="KW-0479">Metal-binding</keyword>
<keyword id="KW-0949">S-adenosyl-L-methionine</keyword>
<keyword id="KW-0784">Thiamine biosynthesis</keyword>
<keyword id="KW-0862">Zinc</keyword>
<accession>Q9PC93</accession>